<reference key="1">
    <citation type="submission" date="2007-02" db="EMBL/GenBank/DDBJ databases">
        <title>Complete sequence of chromosome of Shewanella baltica OS155.</title>
        <authorList>
            <consortium name="US DOE Joint Genome Institute"/>
            <person name="Copeland A."/>
            <person name="Lucas S."/>
            <person name="Lapidus A."/>
            <person name="Barry K."/>
            <person name="Detter J.C."/>
            <person name="Glavina del Rio T."/>
            <person name="Hammon N."/>
            <person name="Israni S."/>
            <person name="Dalin E."/>
            <person name="Tice H."/>
            <person name="Pitluck S."/>
            <person name="Sims D.R."/>
            <person name="Brettin T."/>
            <person name="Bruce D."/>
            <person name="Han C."/>
            <person name="Tapia R."/>
            <person name="Brainard J."/>
            <person name="Schmutz J."/>
            <person name="Larimer F."/>
            <person name="Land M."/>
            <person name="Hauser L."/>
            <person name="Kyrpides N."/>
            <person name="Mikhailova N."/>
            <person name="Brettar I."/>
            <person name="Klappenbach J."/>
            <person name="Konstantinidis K."/>
            <person name="Rodrigues J."/>
            <person name="Tiedje J."/>
            <person name="Richardson P."/>
        </authorList>
    </citation>
    <scope>NUCLEOTIDE SEQUENCE [LARGE SCALE GENOMIC DNA]</scope>
    <source>
        <strain>OS155 / ATCC BAA-1091</strain>
    </source>
</reference>
<dbReference type="EC" id="3.1.13.-" evidence="1"/>
<dbReference type="EMBL" id="CP000563">
    <property type="protein sequence ID" value="ABN61248.1"/>
    <property type="molecule type" value="Genomic_DNA"/>
</dbReference>
<dbReference type="RefSeq" id="WP_011846546.1">
    <property type="nucleotide sequence ID" value="NC_009052.1"/>
</dbReference>
<dbReference type="SMR" id="A3D3D5"/>
<dbReference type="STRING" id="325240.Sbal_1739"/>
<dbReference type="KEGG" id="sbl:Sbal_1739"/>
<dbReference type="HOGENOM" id="CLU_082724_0_0_6"/>
<dbReference type="OrthoDB" id="9778264at2"/>
<dbReference type="Proteomes" id="UP000001557">
    <property type="component" value="Chromosome"/>
</dbReference>
<dbReference type="GO" id="GO:0005829">
    <property type="term" value="C:cytosol"/>
    <property type="evidence" value="ECO:0007669"/>
    <property type="project" value="TreeGrafter"/>
</dbReference>
<dbReference type="GO" id="GO:0008408">
    <property type="term" value="F:3'-5' exonuclease activity"/>
    <property type="evidence" value="ECO:0007669"/>
    <property type="project" value="TreeGrafter"/>
</dbReference>
<dbReference type="GO" id="GO:0000287">
    <property type="term" value="F:magnesium ion binding"/>
    <property type="evidence" value="ECO:0007669"/>
    <property type="project" value="UniProtKB-UniRule"/>
</dbReference>
<dbReference type="GO" id="GO:0003676">
    <property type="term" value="F:nucleic acid binding"/>
    <property type="evidence" value="ECO:0007669"/>
    <property type="project" value="InterPro"/>
</dbReference>
<dbReference type="GO" id="GO:0016896">
    <property type="term" value="F:RNA exonuclease activity, producing 5'-phosphomonoesters"/>
    <property type="evidence" value="ECO:0007669"/>
    <property type="project" value="UniProtKB-UniRule"/>
</dbReference>
<dbReference type="GO" id="GO:0045004">
    <property type="term" value="P:DNA replication proofreading"/>
    <property type="evidence" value="ECO:0007669"/>
    <property type="project" value="TreeGrafter"/>
</dbReference>
<dbReference type="GO" id="GO:0008033">
    <property type="term" value="P:tRNA processing"/>
    <property type="evidence" value="ECO:0007669"/>
    <property type="project" value="UniProtKB-KW"/>
</dbReference>
<dbReference type="CDD" id="cd06134">
    <property type="entry name" value="RNaseT"/>
    <property type="match status" value="1"/>
</dbReference>
<dbReference type="FunFam" id="3.30.420.10:FF:000009">
    <property type="entry name" value="Ribonuclease T"/>
    <property type="match status" value="1"/>
</dbReference>
<dbReference type="Gene3D" id="3.30.420.10">
    <property type="entry name" value="Ribonuclease H-like superfamily/Ribonuclease H"/>
    <property type="match status" value="1"/>
</dbReference>
<dbReference type="HAMAP" id="MF_00157">
    <property type="entry name" value="RNase_T"/>
    <property type="match status" value="1"/>
</dbReference>
<dbReference type="InterPro" id="IPR013520">
    <property type="entry name" value="Exonuclease_RNaseT/DNA_pol3"/>
</dbReference>
<dbReference type="InterPro" id="IPR005987">
    <property type="entry name" value="RNase_T"/>
</dbReference>
<dbReference type="InterPro" id="IPR012337">
    <property type="entry name" value="RNaseH-like_sf"/>
</dbReference>
<dbReference type="InterPro" id="IPR036397">
    <property type="entry name" value="RNaseH_sf"/>
</dbReference>
<dbReference type="NCBIfam" id="TIGR01298">
    <property type="entry name" value="RNaseT"/>
    <property type="match status" value="1"/>
</dbReference>
<dbReference type="PANTHER" id="PTHR30231">
    <property type="entry name" value="DNA POLYMERASE III SUBUNIT EPSILON"/>
    <property type="match status" value="1"/>
</dbReference>
<dbReference type="PANTHER" id="PTHR30231:SF2">
    <property type="entry name" value="RIBONUCLEASE T"/>
    <property type="match status" value="1"/>
</dbReference>
<dbReference type="Pfam" id="PF00929">
    <property type="entry name" value="RNase_T"/>
    <property type="match status" value="1"/>
</dbReference>
<dbReference type="SMART" id="SM00479">
    <property type="entry name" value="EXOIII"/>
    <property type="match status" value="1"/>
</dbReference>
<dbReference type="SUPFAM" id="SSF53098">
    <property type="entry name" value="Ribonuclease H-like"/>
    <property type="match status" value="1"/>
</dbReference>
<protein>
    <recommendedName>
        <fullName evidence="1">Ribonuclease T</fullName>
        <ecNumber evidence="1">3.1.13.-</ecNumber>
    </recommendedName>
    <alternativeName>
        <fullName evidence="1">Exoribonuclease T</fullName>
        <shortName evidence="1">RNase T</shortName>
    </alternativeName>
</protein>
<organism>
    <name type="scientific">Shewanella baltica (strain OS155 / ATCC BAA-1091)</name>
    <dbReference type="NCBI Taxonomy" id="325240"/>
    <lineage>
        <taxon>Bacteria</taxon>
        <taxon>Pseudomonadati</taxon>
        <taxon>Pseudomonadota</taxon>
        <taxon>Gammaproteobacteria</taxon>
        <taxon>Alteromonadales</taxon>
        <taxon>Shewanellaceae</taxon>
        <taxon>Shewanella</taxon>
    </lineage>
</organism>
<sequence length="223" mass="24520">MSDICDANKLKYRFRGYFPVVIDVETAGFNSQTDALLEIAVTLLKMDNEGVIGIDKTLHFHIEPFEGANLEPEALAFNGIDPTNPLRGAVSEKEAFLEIFKAVKKAQKASDCHRSIIVAHNAAFDHGFVSKAIERCDLKRSPFHPFATFDTATLAGLAIGHTVLAKACIMAGIPFDNKEAHSALYDTERTAELFCHIVNRWKSLGGWPLLAVDEQDAQSDTEA</sequence>
<feature type="chain" id="PRO_1000011412" description="Ribonuclease T">
    <location>
        <begin position="1"/>
        <end position="223"/>
    </location>
</feature>
<feature type="domain" description="Exonuclease" evidence="1">
    <location>
        <begin position="20"/>
        <end position="194"/>
    </location>
</feature>
<feature type="active site" description="Proton donor/acceptor" evidence="1">
    <location>
        <position position="181"/>
    </location>
</feature>
<feature type="binding site" evidence="1">
    <location>
        <position position="23"/>
    </location>
    <ligand>
        <name>Mg(2+)</name>
        <dbReference type="ChEBI" id="CHEBI:18420"/>
        <label>1</label>
        <note>catalytic</note>
    </ligand>
</feature>
<feature type="binding site" evidence="1">
    <location>
        <position position="23"/>
    </location>
    <ligand>
        <name>Mg(2+)</name>
        <dbReference type="ChEBI" id="CHEBI:18420"/>
        <label>2</label>
        <note>catalytic</note>
    </ligand>
</feature>
<feature type="binding site" evidence="1">
    <location>
        <position position="25"/>
    </location>
    <ligand>
        <name>Mg(2+)</name>
        <dbReference type="ChEBI" id="CHEBI:18420"/>
        <label>2</label>
        <note>catalytic</note>
    </ligand>
</feature>
<feature type="binding site" evidence="1">
    <location>
        <position position="181"/>
    </location>
    <ligand>
        <name>Mg(2+)</name>
        <dbReference type="ChEBI" id="CHEBI:18420"/>
        <label>2</label>
        <note>catalytic</note>
    </ligand>
</feature>
<feature type="binding site" evidence="1">
    <location>
        <position position="186"/>
    </location>
    <ligand>
        <name>Mg(2+)</name>
        <dbReference type="ChEBI" id="CHEBI:18420"/>
        <label>2</label>
        <note>catalytic</note>
    </ligand>
</feature>
<feature type="site" description="Important for substrate binding and specificity" evidence="1">
    <location>
        <position position="29"/>
    </location>
</feature>
<feature type="site" description="Important for substrate binding and specificity" evidence="1">
    <location>
        <position position="77"/>
    </location>
</feature>
<feature type="site" description="Important for substrate binding and specificity" evidence="1">
    <location>
        <position position="124"/>
    </location>
</feature>
<feature type="site" description="Important for substrate binding and specificity" evidence="1">
    <location>
        <position position="146"/>
    </location>
</feature>
<name>RNT_SHEB5</name>
<gene>
    <name evidence="1" type="primary">rnt</name>
    <name type="ordered locus">Sbal_1739</name>
</gene>
<evidence type="ECO:0000255" key="1">
    <source>
        <dbReference type="HAMAP-Rule" id="MF_00157"/>
    </source>
</evidence>
<keyword id="KW-0269">Exonuclease</keyword>
<keyword id="KW-0378">Hydrolase</keyword>
<keyword id="KW-0460">Magnesium</keyword>
<keyword id="KW-0479">Metal-binding</keyword>
<keyword id="KW-0540">Nuclease</keyword>
<keyword id="KW-1185">Reference proteome</keyword>
<keyword id="KW-0819">tRNA processing</keyword>
<accession>A3D3D5</accession>
<comment type="function">
    <text evidence="1">Trims short 3' overhangs of a variety of RNA species, leaving a one or two nucleotide 3' overhang. Responsible for the end-turnover of tRNA: specifically removes the terminal AMP residue from uncharged tRNA (tRNA-C-C-A). Also appears to be involved in tRNA biosynthesis.</text>
</comment>
<comment type="cofactor">
    <cofactor evidence="1">
        <name>Mg(2+)</name>
        <dbReference type="ChEBI" id="CHEBI:18420"/>
    </cofactor>
    <text evidence="1">Binds two Mg(2+) per subunit. The active form of the enzyme binds two Mg(2+) ions in its active site. The first Mg(2+) forms only one salt bridge with the protein.</text>
</comment>
<comment type="subunit">
    <text evidence="1">Homodimer.</text>
</comment>
<comment type="similarity">
    <text evidence="1">Belongs to the RNase T family.</text>
</comment>
<proteinExistence type="inferred from homology"/>